<sequence length="480" mass="54018">MSETTPHWLTKRADLSPDKKAIEFEDGSSITYLELFHRSQSYARKLGKLGFRQGDHIAILSTNCAEMIQIIYACSYLGAVAVLLNTKLTINELNQQLLDSDAKVIITSESFKASEFVLQRMDYNELESVTEDTSIITLKSEIYFDDIFTMMYTSGTTGFPKAVQQTFGNHWWSATSSALNLGLHDNDKWLIPLPLFHVSGLSTMLKSVIYGMPIYVLEKFEVEKVHNAIMDRKVTIVSVVTVMVQRLIKRLGNHHYPNDFRCMLLGGGPAPKSLLEQAKLKNIPVFQSYGMTETSSQIVTLTPEDALKKIGSAGKPLFPAQLKIAHNENNPNQIGEILVKGPMVTKGYYKRAETNKEVFENNWLHTGDMGYLDEQGYLYVVDRRNDLIISGGENIYPSEIENVLVQIEGIEEAGVKGSPNEEWGMVPIAFIVCSRPISENEIAAHLEKYLAKYKRPKEIHVVNELPRNAANKLVRHNLGK</sequence>
<name>MENE_OCEIH</name>
<organism>
    <name type="scientific">Oceanobacillus iheyensis (strain DSM 14371 / CIP 107618 / JCM 11309 / KCTC 3954 / HTE831)</name>
    <dbReference type="NCBI Taxonomy" id="221109"/>
    <lineage>
        <taxon>Bacteria</taxon>
        <taxon>Bacillati</taxon>
        <taxon>Bacillota</taxon>
        <taxon>Bacilli</taxon>
        <taxon>Bacillales</taxon>
        <taxon>Bacillaceae</taxon>
        <taxon>Oceanobacillus</taxon>
    </lineage>
</organism>
<protein>
    <recommendedName>
        <fullName evidence="1">2-succinylbenzoate--CoA ligase</fullName>
        <ecNumber evidence="1">6.2.1.26</ecNumber>
    </recommendedName>
    <alternativeName>
        <fullName evidence="1">o-succinylbenzoyl-CoA synthetase</fullName>
        <shortName evidence="1">OSB-CoA synthetase</shortName>
    </alternativeName>
</protein>
<reference key="1">
    <citation type="journal article" date="2002" name="Nucleic Acids Res.">
        <title>Genome sequence of Oceanobacillus iheyensis isolated from the Iheya Ridge and its unexpected adaptive capabilities to extreme environments.</title>
        <authorList>
            <person name="Takami H."/>
            <person name="Takaki Y."/>
            <person name="Uchiyama I."/>
        </authorList>
    </citation>
    <scope>NUCLEOTIDE SEQUENCE [LARGE SCALE GENOMIC DNA]</scope>
    <source>
        <strain>DSM 14371 / CIP 107618 / JCM 11309 / KCTC 3954 / HTE831</strain>
    </source>
</reference>
<feature type="chain" id="PRO_0000193165" description="2-succinylbenzoate--CoA ligase">
    <location>
        <begin position="1"/>
        <end position="480"/>
    </location>
</feature>
<evidence type="ECO:0000255" key="1">
    <source>
        <dbReference type="HAMAP-Rule" id="MF_00731"/>
    </source>
</evidence>
<keyword id="KW-0067">ATP-binding</keyword>
<keyword id="KW-0436">Ligase</keyword>
<keyword id="KW-0474">Menaquinone biosynthesis</keyword>
<keyword id="KW-0547">Nucleotide-binding</keyword>
<keyword id="KW-1185">Reference proteome</keyword>
<proteinExistence type="inferred from homology"/>
<accession>Q8ENZ7</accession>
<comment type="function">
    <text evidence="1">Converts 2-succinylbenzoate (OSB) to 2-succinylbenzoyl-CoA (OSB-CoA).</text>
</comment>
<comment type="catalytic activity">
    <reaction evidence="1">
        <text>2-succinylbenzoate + ATP + CoA = 2-succinylbenzoyl-CoA + AMP + diphosphate</text>
        <dbReference type="Rhea" id="RHEA:17009"/>
        <dbReference type="ChEBI" id="CHEBI:18325"/>
        <dbReference type="ChEBI" id="CHEBI:30616"/>
        <dbReference type="ChEBI" id="CHEBI:33019"/>
        <dbReference type="ChEBI" id="CHEBI:57287"/>
        <dbReference type="ChEBI" id="CHEBI:57364"/>
        <dbReference type="ChEBI" id="CHEBI:456215"/>
        <dbReference type="EC" id="6.2.1.26"/>
    </reaction>
</comment>
<comment type="pathway">
    <text evidence="1">Quinol/quinone metabolism; 1,4-dihydroxy-2-naphthoate biosynthesis; 1,4-dihydroxy-2-naphthoate from chorismate: step 5/7.</text>
</comment>
<comment type="pathway">
    <text evidence="1">Quinol/quinone metabolism; menaquinone biosynthesis.</text>
</comment>
<comment type="similarity">
    <text evidence="1">Belongs to the ATP-dependent AMP-binding enzyme family. MenE subfamily.</text>
</comment>
<gene>
    <name evidence="1" type="primary">menE</name>
    <name type="ordered locus">OB2322</name>
</gene>
<dbReference type="EC" id="6.2.1.26" evidence="1"/>
<dbReference type="EMBL" id="BA000028">
    <property type="protein sequence ID" value="BAC14278.1"/>
    <property type="molecule type" value="Genomic_DNA"/>
</dbReference>
<dbReference type="RefSeq" id="WP_011066715.1">
    <property type="nucleotide sequence ID" value="NC_004193.1"/>
</dbReference>
<dbReference type="SMR" id="Q8ENZ7"/>
<dbReference type="STRING" id="221109.gene:10734573"/>
<dbReference type="KEGG" id="oih:OB2322"/>
<dbReference type="eggNOG" id="COG0318">
    <property type="taxonomic scope" value="Bacteria"/>
</dbReference>
<dbReference type="HOGENOM" id="CLU_000022_59_0_9"/>
<dbReference type="OrthoDB" id="9762242at2"/>
<dbReference type="PhylomeDB" id="Q8ENZ7"/>
<dbReference type="UniPathway" id="UPA00079"/>
<dbReference type="UniPathway" id="UPA01057">
    <property type="reaction ID" value="UER00166"/>
</dbReference>
<dbReference type="Proteomes" id="UP000000822">
    <property type="component" value="Chromosome"/>
</dbReference>
<dbReference type="GO" id="GO:0005524">
    <property type="term" value="F:ATP binding"/>
    <property type="evidence" value="ECO:0007669"/>
    <property type="project" value="UniProtKB-KW"/>
</dbReference>
<dbReference type="GO" id="GO:0008756">
    <property type="term" value="F:o-succinylbenzoate-CoA ligase activity"/>
    <property type="evidence" value="ECO:0007669"/>
    <property type="project" value="UniProtKB-UniRule"/>
</dbReference>
<dbReference type="GO" id="GO:0009234">
    <property type="term" value="P:menaquinone biosynthetic process"/>
    <property type="evidence" value="ECO:0007669"/>
    <property type="project" value="UniProtKB-UniRule"/>
</dbReference>
<dbReference type="CDD" id="cd05912">
    <property type="entry name" value="OSB_CoA_lg"/>
    <property type="match status" value="1"/>
</dbReference>
<dbReference type="Gene3D" id="3.30.300.30">
    <property type="match status" value="1"/>
</dbReference>
<dbReference type="Gene3D" id="3.40.50.12780">
    <property type="entry name" value="N-terminal domain of ligase-like"/>
    <property type="match status" value="1"/>
</dbReference>
<dbReference type="HAMAP" id="MF_00731">
    <property type="entry name" value="MenE"/>
    <property type="match status" value="1"/>
</dbReference>
<dbReference type="InterPro" id="IPR025110">
    <property type="entry name" value="AMP-bd_C"/>
</dbReference>
<dbReference type="InterPro" id="IPR045851">
    <property type="entry name" value="AMP-bd_C_sf"/>
</dbReference>
<dbReference type="InterPro" id="IPR020845">
    <property type="entry name" value="AMP-binding_CS"/>
</dbReference>
<dbReference type="InterPro" id="IPR000873">
    <property type="entry name" value="AMP-dep_synth/lig_dom"/>
</dbReference>
<dbReference type="InterPro" id="IPR042099">
    <property type="entry name" value="ANL_N_sf"/>
</dbReference>
<dbReference type="InterPro" id="IPR010192">
    <property type="entry name" value="MenE"/>
</dbReference>
<dbReference type="NCBIfam" id="TIGR01923">
    <property type="entry name" value="menE"/>
    <property type="match status" value="1"/>
</dbReference>
<dbReference type="NCBIfam" id="NF002966">
    <property type="entry name" value="PRK03640.1"/>
    <property type="match status" value="1"/>
</dbReference>
<dbReference type="PANTHER" id="PTHR24096:SF149">
    <property type="entry name" value="AMP-BINDING DOMAIN-CONTAINING PROTEIN-RELATED"/>
    <property type="match status" value="1"/>
</dbReference>
<dbReference type="PANTHER" id="PTHR24096">
    <property type="entry name" value="LONG-CHAIN-FATTY-ACID--COA LIGASE"/>
    <property type="match status" value="1"/>
</dbReference>
<dbReference type="Pfam" id="PF00501">
    <property type="entry name" value="AMP-binding"/>
    <property type="match status" value="1"/>
</dbReference>
<dbReference type="Pfam" id="PF13193">
    <property type="entry name" value="AMP-binding_C"/>
    <property type="match status" value="1"/>
</dbReference>
<dbReference type="SUPFAM" id="SSF56801">
    <property type="entry name" value="Acetyl-CoA synthetase-like"/>
    <property type="match status" value="1"/>
</dbReference>
<dbReference type="PROSITE" id="PS00455">
    <property type="entry name" value="AMP_BINDING"/>
    <property type="match status" value="1"/>
</dbReference>